<accession>A1DH89</accession>
<proteinExistence type="inferred from homology"/>
<comment type="function">
    <text evidence="1">Transcription regulator component of the regulatory network controlling carbon source utilization through ubiquitination and deubiquitination involving creA, creB, creC, creD and acrB. Represses the transcription of the alcR, alcA and aldA genes by binding to a GC-rich region in their promoter. Also plays a role in response to carbon starvation and the control of extracellular proteases activity (By similarity).</text>
</comment>
<comment type="subunit">
    <text evidence="1">Interacts with creB.</text>
</comment>
<comment type="subcellular location">
    <subcellularLocation>
        <location evidence="1">Nucleus</location>
    </subcellularLocation>
</comment>
<comment type="PTM">
    <text evidence="1">Ubiquitinated. Deubiquitinated by creB, probably to control its activity or amount (By similarity).</text>
</comment>
<comment type="similarity">
    <text evidence="4">Belongs to the creA/MIG C2H2-type zinc-finger protein family.</text>
</comment>
<organism>
    <name type="scientific">Neosartorya fischeri (strain ATCC 1020 / DSM 3700 / CBS 544.65 / FGSC A1164 / JCM 1740 / NRRL 181 / WB 181)</name>
    <name type="common">Aspergillus fischerianus</name>
    <dbReference type="NCBI Taxonomy" id="331117"/>
    <lineage>
        <taxon>Eukaryota</taxon>
        <taxon>Fungi</taxon>
        <taxon>Dikarya</taxon>
        <taxon>Ascomycota</taxon>
        <taxon>Pezizomycotina</taxon>
        <taxon>Eurotiomycetes</taxon>
        <taxon>Eurotiomycetidae</taxon>
        <taxon>Eurotiales</taxon>
        <taxon>Aspergillaceae</taxon>
        <taxon>Aspergillus</taxon>
        <taxon>Aspergillus subgen. Fumigati</taxon>
    </lineage>
</organism>
<evidence type="ECO:0000250" key="1"/>
<evidence type="ECO:0000255" key="2">
    <source>
        <dbReference type="PROSITE-ProRule" id="PRU00042"/>
    </source>
</evidence>
<evidence type="ECO:0000256" key="3">
    <source>
        <dbReference type="SAM" id="MobiDB-lite"/>
    </source>
</evidence>
<evidence type="ECO:0000305" key="4"/>
<reference key="1">
    <citation type="journal article" date="2008" name="PLoS Genet.">
        <title>Genomic islands in the pathogenic filamentous fungus Aspergillus fumigatus.</title>
        <authorList>
            <person name="Fedorova N.D."/>
            <person name="Khaldi N."/>
            <person name="Joardar V.S."/>
            <person name="Maiti R."/>
            <person name="Amedeo P."/>
            <person name="Anderson M.J."/>
            <person name="Crabtree J."/>
            <person name="Silva J.C."/>
            <person name="Badger J.H."/>
            <person name="Albarraq A."/>
            <person name="Angiuoli S."/>
            <person name="Bussey H."/>
            <person name="Bowyer P."/>
            <person name="Cotty P.J."/>
            <person name="Dyer P.S."/>
            <person name="Egan A."/>
            <person name="Galens K."/>
            <person name="Fraser-Liggett C.M."/>
            <person name="Haas B.J."/>
            <person name="Inman J.M."/>
            <person name="Kent R."/>
            <person name="Lemieux S."/>
            <person name="Malavazi I."/>
            <person name="Orvis J."/>
            <person name="Roemer T."/>
            <person name="Ronning C.M."/>
            <person name="Sundaram J.P."/>
            <person name="Sutton G."/>
            <person name="Turner G."/>
            <person name="Venter J.C."/>
            <person name="White O.R."/>
            <person name="Whitty B.R."/>
            <person name="Youngman P."/>
            <person name="Wolfe K.H."/>
            <person name="Goldman G.H."/>
            <person name="Wortman J.R."/>
            <person name="Jiang B."/>
            <person name="Denning D.W."/>
            <person name="Nierman W.C."/>
        </authorList>
    </citation>
    <scope>NUCLEOTIDE SEQUENCE [LARGE SCALE GENOMIC DNA]</scope>
    <source>
        <strain>ATCC 1020 / DSM 3700 / CBS 544.65 / FGSC A1164 / JCM 1740 / NRRL 181 / WB 181</strain>
    </source>
</reference>
<protein>
    <recommendedName>
        <fullName>Probable DNA-binding protein creA</fullName>
    </recommendedName>
    <alternativeName>
        <fullName>Carbon catabolite repressor A</fullName>
    </alternativeName>
</protein>
<feature type="chain" id="PRO_0000395725" description="Probable DNA-binding protein creA">
    <location>
        <begin position="1"/>
        <end position="416"/>
    </location>
</feature>
<feature type="zinc finger region" description="C2H2-type 1" evidence="2">
    <location>
        <begin position="66"/>
        <end position="88"/>
    </location>
</feature>
<feature type="zinc finger region" description="C2H2-type 2" evidence="2">
    <location>
        <begin position="94"/>
        <end position="118"/>
    </location>
</feature>
<feature type="region of interest" description="Disordered" evidence="3">
    <location>
        <begin position="1"/>
        <end position="66"/>
    </location>
</feature>
<feature type="region of interest" description="Disordered" evidence="3">
    <location>
        <begin position="107"/>
        <end position="126"/>
    </location>
</feature>
<feature type="region of interest" description="Disordered" evidence="3">
    <location>
        <begin position="153"/>
        <end position="176"/>
    </location>
</feature>
<feature type="region of interest" description="Disordered" evidence="3">
    <location>
        <begin position="258"/>
        <end position="319"/>
    </location>
</feature>
<feature type="region of interest" description="Disordered" evidence="3">
    <location>
        <begin position="339"/>
        <end position="378"/>
    </location>
</feature>
<feature type="region of interest" description="Disordered" evidence="3">
    <location>
        <begin position="395"/>
        <end position="416"/>
    </location>
</feature>
<feature type="compositionally biased region" description="Polar residues" evidence="3">
    <location>
        <begin position="7"/>
        <end position="42"/>
    </location>
</feature>
<feature type="compositionally biased region" description="Basic and acidic residues" evidence="3">
    <location>
        <begin position="54"/>
        <end position="64"/>
    </location>
</feature>
<feature type="compositionally biased region" description="Basic and acidic residues" evidence="3">
    <location>
        <begin position="263"/>
        <end position="272"/>
    </location>
</feature>
<feature type="compositionally biased region" description="Low complexity" evidence="3">
    <location>
        <begin position="280"/>
        <end position="294"/>
    </location>
</feature>
<feature type="compositionally biased region" description="Low complexity" evidence="3">
    <location>
        <begin position="398"/>
        <end position="408"/>
    </location>
</feature>
<dbReference type="EMBL" id="DS027696">
    <property type="protein sequence ID" value="EAW18746.1"/>
    <property type="molecule type" value="Genomic_DNA"/>
</dbReference>
<dbReference type="RefSeq" id="XP_001260643.1">
    <property type="nucleotide sequence ID" value="XM_001260642.1"/>
</dbReference>
<dbReference type="SMR" id="A1DH89"/>
<dbReference type="STRING" id="331117.A1DH89"/>
<dbReference type="EnsemblFungi" id="EAW18746">
    <property type="protein sequence ID" value="EAW18746"/>
    <property type="gene ID" value="NFIA_087020"/>
</dbReference>
<dbReference type="GeneID" id="4587201"/>
<dbReference type="KEGG" id="nfi:NFIA_087020"/>
<dbReference type="VEuPathDB" id="FungiDB:NFIA_087020"/>
<dbReference type="eggNOG" id="KOG1721">
    <property type="taxonomic scope" value="Eukaryota"/>
</dbReference>
<dbReference type="HOGENOM" id="CLU_036230_0_0_1"/>
<dbReference type="OMA" id="YHMARSH"/>
<dbReference type="OrthoDB" id="654211at2759"/>
<dbReference type="Proteomes" id="UP000006702">
    <property type="component" value="Unassembled WGS sequence"/>
</dbReference>
<dbReference type="GO" id="GO:0005737">
    <property type="term" value="C:cytoplasm"/>
    <property type="evidence" value="ECO:0007669"/>
    <property type="project" value="TreeGrafter"/>
</dbReference>
<dbReference type="GO" id="GO:0005634">
    <property type="term" value="C:nucleus"/>
    <property type="evidence" value="ECO:0007669"/>
    <property type="project" value="UniProtKB-SubCell"/>
</dbReference>
<dbReference type="GO" id="GO:0000978">
    <property type="term" value="F:RNA polymerase II cis-regulatory region sequence-specific DNA binding"/>
    <property type="evidence" value="ECO:0007669"/>
    <property type="project" value="TreeGrafter"/>
</dbReference>
<dbReference type="GO" id="GO:0008270">
    <property type="term" value="F:zinc ion binding"/>
    <property type="evidence" value="ECO:0007669"/>
    <property type="project" value="UniProtKB-KW"/>
</dbReference>
<dbReference type="GO" id="GO:0000433">
    <property type="term" value="P:carbon catabolite repression of transcription from RNA polymerase II promoter by glucose"/>
    <property type="evidence" value="ECO:0007669"/>
    <property type="project" value="TreeGrafter"/>
</dbReference>
<dbReference type="FunFam" id="3.30.160.60:FF:000089">
    <property type="entry name" value="DNA-binding protein creA"/>
    <property type="match status" value="1"/>
</dbReference>
<dbReference type="FunFam" id="3.30.160.60:FF:000152">
    <property type="entry name" value="DNA-binding protein creA"/>
    <property type="match status" value="1"/>
</dbReference>
<dbReference type="Gene3D" id="3.30.160.60">
    <property type="entry name" value="Classic Zinc Finger"/>
    <property type="match status" value="2"/>
</dbReference>
<dbReference type="InterPro" id="IPR051007">
    <property type="entry name" value="creA/MIG_C2H2-ZnF"/>
</dbReference>
<dbReference type="InterPro" id="IPR036236">
    <property type="entry name" value="Znf_C2H2_sf"/>
</dbReference>
<dbReference type="InterPro" id="IPR013087">
    <property type="entry name" value="Znf_C2H2_type"/>
</dbReference>
<dbReference type="PANTHER" id="PTHR47428">
    <property type="entry name" value="REGULATORY PROTEIN MIG1-RELATED"/>
    <property type="match status" value="1"/>
</dbReference>
<dbReference type="PANTHER" id="PTHR47428:SF1">
    <property type="entry name" value="REGULATORY PROTEIN MIG1-RELATED"/>
    <property type="match status" value="1"/>
</dbReference>
<dbReference type="Pfam" id="PF00096">
    <property type="entry name" value="zf-C2H2"/>
    <property type="match status" value="2"/>
</dbReference>
<dbReference type="SMART" id="SM00355">
    <property type="entry name" value="ZnF_C2H2"/>
    <property type="match status" value="2"/>
</dbReference>
<dbReference type="SUPFAM" id="SSF57667">
    <property type="entry name" value="beta-beta-alpha zinc fingers"/>
    <property type="match status" value="1"/>
</dbReference>
<dbReference type="PROSITE" id="PS00028">
    <property type="entry name" value="ZINC_FINGER_C2H2_1"/>
    <property type="match status" value="2"/>
</dbReference>
<dbReference type="PROSITE" id="PS50157">
    <property type="entry name" value="ZINC_FINGER_C2H2_2"/>
    <property type="match status" value="2"/>
</dbReference>
<sequence>MGFSDLLNPQNPESTPSTPANKSSAPSTPSTGQSNSNMTSVSLLPPLMKGARPANEEPRQDLPRPYKCPLCDRAFHRLEHQTRHIRTHTGEKPHACQFPGCTKRFSRSDELTRHSRIHNNPNSRRNNKAQHLAAAAAAAAANQDNALASNAASMMPPPSKPITRSAPVSQVGSPDISPPHSFSNYAGHMRSNLGPYARNSDRASSGMDINLLATAASQVERDEHYGFHNGPRGHHIFGSRHHNSNRLPSLSAYAISQNMSRSHSHDEDDMYSHRVKRSRPNSPNSTAPSSPTFSHDSLSPTPDHTPLATPAHSPRLRPLGTSELQLPSIRHLSLHHTPALAPMEPQPEGPNYYSPTQPHVGPSISDIMSKPDGTQRKLPVPQVPKVAVQDLLSPGFTSVSSSASNSVAGGDLADRF</sequence>
<name>CREA_NEOFI</name>
<gene>
    <name type="primary">creA</name>
    <name type="ORF">NFIA_087020</name>
</gene>
<keyword id="KW-0238">DNA-binding</keyword>
<keyword id="KW-0479">Metal-binding</keyword>
<keyword id="KW-0539">Nucleus</keyword>
<keyword id="KW-1185">Reference proteome</keyword>
<keyword id="KW-0677">Repeat</keyword>
<keyword id="KW-0678">Repressor</keyword>
<keyword id="KW-0804">Transcription</keyword>
<keyword id="KW-0805">Transcription regulation</keyword>
<keyword id="KW-0832">Ubl conjugation</keyword>
<keyword id="KW-0862">Zinc</keyword>
<keyword id="KW-0863">Zinc-finger</keyword>